<feature type="chain" id="PRO_1000068241" description="Phosphonoacetaldehyde hydrolase">
    <location>
        <begin position="1"/>
        <end position="271"/>
    </location>
</feature>
<feature type="active site" description="Nucleophile" evidence="1">
    <location>
        <position position="12"/>
    </location>
</feature>
<feature type="active site" description="Schiff-base intermediate with substrate" evidence="1">
    <location>
        <position position="54"/>
    </location>
</feature>
<feature type="binding site" evidence="1">
    <location>
        <position position="12"/>
    </location>
    <ligand>
        <name>Mg(2+)</name>
        <dbReference type="ChEBI" id="CHEBI:18420"/>
    </ligand>
</feature>
<feature type="binding site" evidence="1">
    <location>
        <position position="14"/>
    </location>
    <ligand>
        <name>Mg(2+)</name>
        <dbReference type="ChEBI" id="CHEBI:18420"/>
    </ligand>
</feature>
<feature type="binding site" evidence="1">
    <location>
        <position position="188"/>
    </location>
    <ligand>
        <name>Mg(2+)</name>
        <dbReference type="ChEBI" id="CHEBI:18420"/>
    </ligand>
</feature>
<reference key="1">
    <citation type="submission" date="2007-08" db="EMBL/GenBank/DDBJ databases">
        <authorList>
            <consortium name="The Vibrio harveyi Genome Sequencing Project"/>
            <person name="Bassler B."/>
            <person name="Clifton S.W."/>
            <person name="Fulton L."/>
            <person name="Delehaunty K."/>
            <person name="Fronick C."/>
            <person name="Harrison M."/>
            <person name="Markivic C."/>
            <person name="Fulton R."/>
            <person name="Tin-Wollam A.-M."/>
            <person name="Shah N."/>
            <person name="Pepin K."/>
            <person name="Nash W."/>
            <person name="Thiruvilangam P."/>
            <person name="Bhonagiri V."/>
            <person name="Waters C."/>
            <person name="Tu K.C."/>
            <person name="Irgon J."/>
            <person name="Wilson R.K."/>
        </authorList>
    </citation>
    <scope>NUCLEOTIDE SEQUENCE [LARGE SCALE GENOMIC DNA]</scope>
    <source>
        <strain>ATCC BAA-1116 / BB120</strain>
    </source>
</reference>
<name>PHNX_VIBC1</name>
<keyword id="KW-0378">Hydrolase</keyword>
<keyword id="KW-0460">Magnesium</keyword>
<keyword id="KW-0479">Metal-binding</keyword>
<keyword id="KW-0704">Schiff base</keyword>
<protein>
    <recommendedName>
        <fullName evidence="1">Phosphonoacetaldehyde hydrolase</fullName>
        <shortName evidence="1">Phosphonatase</shortName>
        <ecNumber evidence="1">3.11.1.1</ecNumber>
    </recommendedName>
    <alternativeName>
        <fullName evidence="1">Phosphonoacetaldehyde phosphonohydrolase</fullName>
    </alternativeName>
</protein>
<sequence>MSNSPIQAVIFDWAGTIVDFGSFAPTSIFVEAFKQGFDFEIDLEEAREPMGLGKWDHIQAVGRIPAVDKRWNEKFGRSMTSEDIDAIYAAFMPLQKAKVADHADPILNAIEVVNGLKDKGIKIGSCSGYPREVMDVLIPVAADYGYKPDYVVATDDLPQGGRPAPFMALKNVIELNVTDVNACIKVDDAAPGIDEGHNAGMWTVGLLLSGNEAGLTFEEYQAADEATLNAAREKARAKLLKSSPHYLIDTIADFPEVVADIERRLAAGERP</sequence>
<accession>A7N333</accession>
<organism>
    <name type="scientific">Vibrio campbellii (strain ATCC BAA-1116)</name>
    <dbReference type="NCBI Taxonomy" id="2902295"/>
    <lineage>
        <taxon>Bacteria</taxon>
        <taxon>Pseudomonadati</taxon>
        <taxon>Pseudomonadota</taxon>
        <taxon>Gammaproteobacteria</taxon>
        <taxon>Vibrionales</taxon>
        <taxon>Vibrionaceae</taxon>
        <taxon>Vibrio</taxon>
    </lineage>
</organism>
<dbReference type="EC" id="3.11.1.1" evidence="1"/>
<dbReference type="EMBL" id="CP000790">
    <property type="protein sequence ID" value="ABU72782.1"/>
    <property type="molecule type" value="Genomic_DNA"/>
</dbReference>
<dbReference type="RefSeq" id="WP_011999177.1">
    <property type="nucleotide sequence ID" value="NC_022270.1"/>
</dbReference>
<dbReference type="SMR" id="A7N333"/>
<dbReference type="KEGG" id="vha:VIBHAR_04874"/>
<dbReference type="PATRIC" id="fig|338187.25.peg.5315"/>
<dbReference type="Proteomes" id="UP000008152">
    <property type="component" value="Chromosome II"/>
</dbReference>
<dbReference type="GO" id="GO:0005829">
    <property type="term" value="C:cytosol"/>
    <property type="evidence" value="ECO:0007669"/>
    <property type="project" value="TreeGrafter"/>
</dbReference>
<dbReference type="GO" id="GO:0000287">
    <property type="term" value="F:magnesium ion binding"/>
    <property type="evidence" value="ECO:0007669"/>
    <property type="project" value="UniProtKB-UniRule"/>
</dbReference>
<dbReference type="GO" id="GO:0008967">
    <property type="term" value="F:phosphoglycolate phosphatase activity"/>
    <property type="evidence" value="ECO:0007669"/>
    <property type="project" value="TreeGrafter"/>
</dbReference>
<dbReference type="GO" id="GO:0050194">
    <property type="term" value="F:phosphonoacetaldehyde hydrolase activity"/>
    <property type="evidence" value="ECO:0007669"/>
    <property type="project" value="UniProtKB-UniRule"/>
</dbReference>
<dbReference type="GO" id="GO:0006281">
    <property type="term" value="P:DNA repair"/>
    <property type="evidence" value="ECO:0007669"/>
    <property type="project" value="TreeGrafter"/>
</dbReference>
<dbReference type="GO" id="GO:0019700">
    <property type="term" value="P:organic phosphonate catabolic process"/>
    <property type="evidence" value="ECO:0007669"/>
    <property type="project" value="InterPro"/>
</dbReference>
<dbReference type="CDD" id="cd02586">
    <property type="entry name" value="HAD_PHN"/>
    <property type="match status" value="1"/>
</dbReference>
<dbReference type="FunFam" id="1.10.150.240:FF:000006">
    <property type="entry name" value="Phosphonoacetaldehyde hydrolase"/>
    <property type="match status" value="1"/>
</dbReference>
<dbReference type="Gene3D" id="3.40.50.1000">
    <property type="entry name" value="HAD superfamily/HAD-like"/>
    <property type="match status" value="1"/>
</dbReference>
<dbReference type="Gene3D" id="1.10.150.240">
    <property type="entry name" value="Putative phosphatase, domain 2"/>
    <property type="match status" value="1"/>
</dbReference>
<dbReference type="HAMAP" id="MF_01375">
    <property type="entry name" value="PhnX"/>
    <property type="match status" value="1"/>
</dbReference>
<dbReference type="InterPro" id="IPR050155">
    <property type="entry name" value="HAD-like_hydrolase_sf"/>
</dbReference>
<dbReference type="InterPro" id="IPR036412">
    <property type="entry name" value="HAD-like_sf"/>
</dbReference>
<dbReference type="InterPro" id="IPR006439">
    <property type="entry name" value="HAD-SF_hydro_IA"/>
</dbReference>
<dbReference type="InterPro" id="IPR023214">
    <property type="entry name" value="HAD_sf"/>
</dbReference>
<dbReference type="InterPro" id="IPR023198">
    <property type="entry name" value="PGP-like_dom2"/>
</dbReference>
<dbReference type="InterPro" id="IPR006323">
    <property type="entry name" value="Phosphonoacetald_hydro"/>
</dbReference>
<dbReference type="NCBIfam" id="TIGR01509">
    <property type="entry name" value="HAD-SF-IA-v3"/>
    <property type="match status" value="1"/>
</dbReference>
<dbReference type="NCBIfam" id="TIGR01422">
    <property type="entry name" value="phosphonatase"/>
    <property type="match status" value="1"/>
</dbReference>
<dbReference type="PANTHER" id="PTHR43434">
    <property type="entry name" value="PHOSPHOGLYCOLATE PHOSPHATASE"/>
    <property type="match status" value="1"/>
</dbReference>
<dbReference type="PANTHER" id="PTHR43434:SF19">
    <property type="entry name" value="PHOSPHONOACETALDEHYDE HYDROLASE"/>
    <property type="match status" value="1"/>
</dbReference>
<dbReference type="Pfam" id="PF00702">
    <property type="entry name" value="Hydrolase"/>
    <property type="match status" value="1"/>
</dbReference>
<dbReference type="SFLD" id="SFLDG01129">
    <property type="entry name" value="C1.5:_HAD__Beta-PGM__Phosphata"/>
    <property type="match status" value="1"/>
</dbReference>
<dbReference type="SFLD" id="SFLDF00038">
    <property type="entry name" value="phosphonoacetaldehyde_hydrolas"/>
    <property type="match status" value="1"/>
</dbReference>
<dbReference type="SUPFAM" id="SSF56784">
    <property type="entry name" value="HAD-like"/>
    <property type="match status" value="1"/>
</dbReference>
<gene>
    <name evidence="1" type="primary">phnX</name>
    <name type="ordered locus">VIBHAR_04874</name>
</gene>
<proteinExistence type="inferred from homology"/>
<comment type="function">
    <text evidence="1">Involved in phosphonate degradation.</text>
</comment>
<comment type="catalytic activity">
    <reaction evidence="1">
        <text>phosphonoacetaldehyde + H2O = acetaldehyde + phosphate + H(+)</text>
        <dbReference type="Rhea" id="RHEA:18905"/>
        <dbReference type="ChEBI" id="CHEBI:15343"/>
        <dbReference type="ChEBI" id="CHEBI:15377"/>
        <dbReference type="ChEBI" id="CHEBI:15378"/>
        <dbReference type="ChEBI" id="CHEBI:43474"/>
        <dbReference type="ChEBI" id="CHEBI:58383"/>
        <dbReference type="EC" id="3.11.1.1"/>
    </reaction>
</comment>
<comment type="cofactor">
    <cofactor evidence="1">
        <name>Mg(2+)</name>
        <dbReference type="ChEBI" id="CHEBI:18420"/>
    </cofactor>
    <text evidence="1">Binds 1 Mg(2+) ion per subunit.</text>
</comment>
<comment type="subunit">
    <text evidence="1">Homodimer.</text>
</comment>
<comment type="similarity">
    <text evidence="1">Belongs to the HAD-like hydrolase superfamily. PhnX family.</text>
</comment>
<evidence type="ECO:0000255" key="1">
    <source>
        <dbReference type="HAMAP-Rule" id="MF_01375"/>
    </source>
</evidence>